<keyword id="KW-0067">ATP-binding</keyword>
<keyword id="KW-0997">Cell inner membrane</keyword>
<keyword id="KW-1003">Cell membrane</keyword>
<keyword id="KW-0963">Cytoplasm</keyword>
<keyword id="KW-0472">Membrane</keyword>
<keyword id="KW-0479">Metal-binding</keyword>
<keyword id="KW-0547">Nucleotide-binding</keyword>
<keyword id="KW-0653">Protein transport</keyword>
<keyword id="KW-1278">Translocase</keyword>
<keyword id="KW-0811">Translocation</keyword>
<keyword id="KW-0813">Transport</keyword>
<keyword id="KW-0862">Zinc</keyword>
<dbReference type="EC" id="7.4.2.8" evidence="1"/>
<dbReference type="EMBL" id="AE016795">
    <property type="protein sequence ID" value="AAO09086.1"/>
    <property type="molecule type" value="Genomic_DNA"/>
</dbReference>
<dbReference type="RefSeq" id="WP_011078656.1">
    <property type="nucleotide sequence ID" value="NC_004459.3"/>
</dbReference>
<dbReference type="SMR" id="Q8DEL8"/>
<dbReference type="KEGG" id="vvu:VV1_0569"/>
<dbReference type="HOGENOM" id="CLU_005314_3_0_6"/>
<dbReference type="Proteomes" id="UP000002275">
    <property type="component" value="Chromosome 1"/>
</dbReference>
<dbReference type="GO" id="GO:0031522">
    <property type="term" value="C:cell envelope Sec protein transport complex"/>
    <property type="evidence" value="ECO:0007669"/>
    <property type="project" value="TreeGrafter"/>
</dbReference>
<dbReference type="GO" id="GO:0005829">
    <property type="term" value="C:cytosol"/>
    <property type="evidence" value="ECO:0007669"/>
    <property type="project" value="TreeGrafter"/>
</dbReference>
<dbReference type="GO" id="GO:0005886">
    <property type="term" value="C:plasma membrane"/>
    <property type="evidence" value="ECO:0007669"/>
    <property type="project" value="UniProtKB-SubCell"/>
</dbReference>
<dbReference type="GO" id="GO:0005524">
    <property type="term" value="F:ATP binding"/>
    <property type="evidence" value="ECO:0007669"/>
    <property type="project" value="UniProtKB-UniRule"/>
</dbReference>
<dbReference type="GO" id="GO:0046872">
    <property type="term" value="F:metal ion binding"/>
    <property type="evidence" value="ECO:0007669"/>
    <property type="project" value="UniProtKB-KW"/>
</dbReference>
<dbReference type="GO" id="GO:0008564">
    <property type="term" value="F:protein-exporting ATPase activity"/>
    <property type="evidence" value="ECO:0007669"/>
    <property type="project" value="UniProtKB-EC"/>
</dbReference>
<dbReference type="GO" id="GO:0065002">
    <property type="term" value="P:intracellular protein transmembrane transport"/>
    <property type="evidence" value="ECO:0007669"/>
    <property type="project" value="UniProtKB-UniRule"/>
</dbReference>
<dbReference type="GO" id="GO:0017038">
    <property type="term" value="P:protein import"/>
    <property type="evidence" value="ECO:0007669"/>
    <property type="project" value="InterPro"/>
</dbReference>
<dbReference type="GO" id="GO:0006605">
    <property type="term" value="P:protein targeting"/>
    <property type="evidence" value="ECO:0007669"/>
    <property type="project" value="UniProtKB-UniRule"/>
</dbReference>
<dbReference type="GO" id="GO:0043952">
    <property type="term" value="P:protein transport by the Sec complex"/>
    <property type="evidence" value="ECO:0007669"/>
    <property type="project" value="TreeGrafter"/>
</dbReference>
<dbReference type="CDD" id="cd17928">
    <property type="entry name" value="DEXDc_SecA"/>
    <property type="match status" value="1"/>
</dbReference>
<dbReference type="CDD" id="cd18803">
    <property type="entry name" value="SF2_C_secA"/>
    <property type="match status" value="1"/>
</dbReference>
<dbReference type="FunFam" id="1.10.3060.10:FF:000001">
    <property type="entry name" value="Preprotein translocase subunit SecA"/>
    <property type="match status" value="1"/>
</dbReference>
<dbReference type="FunFam" id="3.40.50.300:FF:000081">
    <property type="entry name" value="Preprotein translocase subunit SecA"/>
    <property type="match status" value="1"/>
</dbReference>
<dbReference type="FunFam" id="3.40.50.300:FF:000113">
    <property type="entry name" value="Preprotein translocase subunit SecA"/>
    <property type="match status" value="1"/>
</dbReference>
<dbReference type="FunFam" id="3.90.1440.10:FF:000001">
    <property type="entry name" value="Preprotein translocase subunit SecA"/>
    <property type="match status" value="1"/>
</dbReference>
<dbReference type="Gene3D" id="1.10.3060.10">
    <property type="entry name" value="Helical scaffold and wing domains of SecA"/>
    <property type="match status" value="1"/>
</dbReference>
<dbReference type="Gene3D" id="3.40.50.300">
    <property type="entry name" value="P-loop containing nucleotide triphosphate hydrolases"/>
    <property type="match status" value="2"/>
</dbReference>
<dbReference type="Gene3D" id="3.90.1440.10">
    <property type="entry name" value="SecA, preprotein cross-linking domain"/>
    <property type="match status" value="1"/>
</dbReference>
<dbReference type="HAMAP" id="MF_01382">
    <property type="entry name" value="SecA"/>
    <property type="match status" value="1"/>
</dbReference>
<dbReference type="InterPro" id="IPR014001">
    <property type="entry name" value="Helicase_ATP-bd"/>
</dbReference>
<dbReference type="InterPro" id="IPR001650">
    <property type="entry name" value="Helicase_C-like"/>
</dbReference>
<dbReference type="InterPro" id="IPR027417">
    <property type="entry name" value="P-loop_NTPase"/>
</dbReference>
<dbReference type="InterPro" id="IPR004027">
    <property type="entry name" value="SEC_C_motif"/>
</dbReference>
<dbReference type="InterPro" id="IPR000185">
    <property type="entry name" value="SecA"/>
</dbReference>
<dbReference type="InterPro" id="IPR020937">
    <property type="entry name" value="SecA_CS"/>
</dbReference>
<dbReference type="InterPro" id="IPR011115">
    <property type="entry name" value="SecA_DEAD"/>
</dbReference>
<dbReference type="InterPro" id="IPR014018">
    <property type="entry name" value="SecA_motor_DEAD"/>
</dbReference>
<dbReference type="InterPro" id="IPR011130">
    <property type="entry name" value="SecA_preprotein_X-link_dom"/>
</dbReference>
<dbReference type="InterPro" id="IPR044722">
    <property type="entry name" value="SecA_SF2_C"/>
</dbReference>
<dbReference type="InterPro" id="IPR011116">
    <property type="entry name" value="SecA_Wing/Scaffold"/>
</dbReference>
<dbReference type="InterPro" id="IPR036266">
    <property type="entry name" value="SecA_Wing/Scaffold_sf"/>
</dbReference>
<dbReference type="InterPro" id="IPR036670">
    <property type="entry name" value="SecA_X-link_sf"/>
</dbReference>
<dbReference type="NCBIfam" id="NF009538">
    <property type="entry name" value="PRK12904.1"/>
    <property type="match status" value="1"/>
</dbReference>
<dbReference type="NCBIfam" id="TIGR00963">
    <property type="entry name" value="secA"/>
    <property type="match status" value="1"/>
</dbReference>
<dbReference type="PANTHER" id="PTHR30612:SF0">
    <property type="entry name" value="CHLOROPLAST PROTEIN-TRANSPORTING ATPASE"/>
    <property type="match status" value="1"/>
</dbReference>
<dbReference type="PANTHER" id="PTHR30612">
    <property type="entry name" value="SECA INNER MEMBRANE COMPONENT OF SEC PROTEIN SECRETION SYSTEM"/>
    <property type="match status" value="1"/>
</dbReference>
<dbReference type="Pfam" id="PF21090">
    <property type="entry name" value="P-loop_SecA"/>
    <property type="match status" value="1"/>
</dbReference>
<dbReference type="Pfam" id="PF02810">
    <property type="entry name" value="SEC-C"/>
    <property type="match status" value="1"/>
</dbReference>
<dbReference type="Pfam" id="PF07517">
    <property type="entry name" value="SecA_DEAD"/>
    <property type="match status" value="1"/>
</dbReference>
<dbReference type="Pfam" id="PF01043">
    <property type="entry name" value="SecA_PP_bind"/>
    <property type="match status" value="1"/>
</dbReference>
<dbReference type="Pfam" id="PF07516">
    <property type="entry name" value="SecA_SW"/>
    <property type="match status" value="1"/>
</dbReference>
<dbReference type="PRINTS" id="PR00906">
    <property type="entry name" value="SECA"/>
</dbReference>
<dbReference type="SMART" id="SM00957">
    <property type="entry name" value="SecA_DEAD"/>
    <property type="match status" value="1"/>
</dbReference>
<dbReference type="SMART" id="SM00958">
    <property type="entry name" value="SecA_PP_bind"/>
    <property type="match status" value="1"/>
</dbReference>
<dbReference type="SUPFAM" id="SSF81886">
    <property type="entry name" value="Helical scaffold and wing domains of SecA"/>
    <property type="match status" value="1"/>
</dbReference>
<dbReference type="SUPFAM" id="SSF52540">
    <property type="entry name" value="P-loop containing nucleoside triphosphate hydrolases"/>
    <property type="match status" value="2"/>
</dbReference>
<dbReference type="SUPFAM" id="SSF81767">
    <property type="entry name" value="Pre-protein crosslinking domain of SecA"/>
    <property type="match status" value="1"/>
</dbReference>
<dbReference type="PROSITE" id="PS01312">
    <property type="entry name" value="SECA"/>
    <property type="match status" value="1"/>
</dbReference>
<dbReference type="PROSITE" id="PS51196">
    <property type="entry name" value="SECA_MOTOR_DEAD"/>
    <property type="match status" value="1"/>
</dbReference>
<gene>
    <name evidence="1" type="primary">secA</name>
    <name type="ordered locus">VV1_0569</name>
</gene>
<reference key="1">
    <citation type="submission" date="2002-12" db="EMBL/GenBank/DDBJ databases">
        <title>Complete genome sequence of Vibrio vulnificus CMCP6.</title>
        <authorList>
            <person name="Rhee J.H."/>
            <person name="Kim S.Y."/>
            <person name="Chung S.S."/>
            <person name="Kim J.J."/>
            <person name="Moon Y.H."/>
            <person name="Jeong H."/>
            <person name="Choy H.E."/>
        </authorList>
    </citation>
    <scope>NUCLEOTIDE SEQUENCE [LARGE SCALE GENOMIC DNA]</scope>
    <source>
        <strain>CMCP6</strain>
    </source>
</reference>
<name>SECA_VIBVU</name>
<comment type="function">
    <text evidence="1">Part of the Sec protein translocase complex. Interacts with the SecYEG preprotein conducting channel. Has a central role in coupling the hydrolysis of ATP to the transfer of proteins into and across the cell membrane, serving both as a receptor for the preprotein-SecB complex and as an ATP-driven molecular motor driving the stepwise translocation of polypeptide chains across the membrane.</text>
</comment>
<comment type="catalytic activity">
    <reaction evidence="1">
        <text>ATP + H2O + cellular proteinSide 1 = ADP + phosphate + cellular proteinSide 2.</text>
        <dbReference type="EC" id="7.4.2.8"/>
    </reaction>
</comment>
<comment type="cofactor">
    <cofactor evidence="1">
        <name>Zn(2+)</name>
        <dbReference type="ChEBI" id="CHEBI:29105"/>
    </cofactor>
    <text evidence="1">May bind 1 zinc ion per subunit.</text>
</comment>
<comment type="subunit">
    <text evidence="1">Monomer and homodimer. Part of the essential Sec protein translocation apparatus which comprises SecA, SecYEG and auxiliary proteins SecDF-YajC and YidC.</text>
</comment>
<comment type="subcellular location">
    <subcellularLocation>
        <location evidence="1">Cell inner membrane</location>
        <topology evidence="1">Peripheral membrane protein</topology>
        <orientation evidence="1">Cytoplasmic side</orientation>
    </subcellularLocation>
    <subcellularLocation>
        <location evidence="1">Cytoplasm</location>
    </subcellularLocation>
    <text evidence="1">Distribution is 50-50.</text>
</comment>
<comment type="similarity">
    <text evidence="1">Belongs to the SecA family.</text>
</comment>
<sequence>MITKLLTKVIGSRNDRTLRRLRKIVKEINNYEPTFEALSDEQLKAKTVEFRQRLEQGETLDQLLPEAFATVREASKRVYGMRHFDVQLIGGMVLNAGQIAEMRTGEGKTLTATLPAYLNALAGKGVHIVTVNDYLAKRDAETNRPLFEFLGMTVGINVPNMPHPAKKEAYQADILYGTNNEFGFDYLRDNMAFRNEDRVQRERFFAVVDEVDSILIDEARTPLIISGPAEDSSELYTRINALIPLLQKQDKEDSEEYRGDGHYTVDEKSKQVHLTETGQEFVEELMVKNGLMEEGDTLYSPTNISLLHHVNAALRAHVLFEKNVDYIVNEDGEVVIVDEHTGRTMPGRRWSEGLHQAVEAKEGVKIQNENQTLASITFQNYFRLYEKLSGMTGTADTEAFEFQSIYGLETVVIPTNKPMIRNDMPDVVYRTEAEKFAAIIEDIKARVEKGQPVLVGTVSIEKSELLSNALKKAKIKHNVLNAKFHEKEAEIVAEAGKPGSVTIATNMAGRGTDIVLGGSWQAKVESMANPTQEQIDEIKAEWKLVHDQVLESGGLHIIGTERHESRRIDNQLRGRSGRQGDAGSSRFYLSMEDSLLRIFTSDRMAALIQSGMEEGEAIESKMLSRSIEKAQRKVEGRNFDIRKQLLEYDDVANDQRKVVYELRDELMSVDDISDMIEHNRVDVLQGVIDEYIPPQSLEDMWDLEGLQERLKNDFDIDAPVKQWLEEDDKLYEEALREKVINTAVEVYKAKEEVVGAQVLRNFEKSVMLQTLDTLWKEHLAAMDHLRQGIHLRGYAQKNPKQEYKRESFELFEGLLETLKSDVVMILSKVRVQQQEEVERMEAQRRAQAEEAARRAQAQHASAQSQLADDSDEGHHQPVVRDERKVGRNEPCPCGSGKKYKQCHGQIN</sequence>
<protein>
    <recommendedName>
        <fullName evidence="1">Protein translocase subunit SecA</fullName>
        <ecNumber evidence="1">7.4.2.8</ecNumber>
    </recommendedName>
</protein>
<accession>Q8DEL8</accession>
<organism>
    <name type="scientific">Vibrio vulnificus (strain CMCP6)</name>
    <dbReference type="NCBI Taxonomy" id="216895"/>
    <lineage>
        <taxon>Bacteria</taxon>
        <taxon>Pseudomonadati</taxon>
        <taxon>Pseudomonadota</taxon>
        <taxon>Gammaproteobacteria</taxon>
        <taxon>Vibrionales</taxon>
        <taxon>Vibrionaceae</taxon>
        <taxon>Vibrio</taxon>
    </lineage>
</organism>
<feature type="chain" id="PRO_0000321036" description="Protein translocase subunit SecA">
    <location>
        <begin position="1"/>
        <end position="907"/>
    </location>
</feature>
<feature type="region of interest" description="Disordered" evidence="2">
    <location>
        <begin position="841"/>
        <end position="907"/>
    </location>
</feature>
<feature type="compositionally biased region" description="Basic and acidic residues" evidence="2">
    <location>
        <begin position="841"/>
        <end position="853"/>
    </location>
</feature>
<feature type="compositionally biased region" description="Low complexity" evidence="2">
    <location>
        <begin position="854"/>
        <end position="865"/>
    </location>
</feature>
<feature type="compositionally biased region" description="Basic and acidic residues" evidence="2">
    <location>
        <begin position="872"/>
        <end position="887"/>
    </location>
</feature>
<feature type="binding site" evidence="1">
    <location>
        <position position="87"/>
    </location>
    <ligand>
        <name>ATP</name>
        <dbReference type="ChEBI" id="CHEBI:30616"/>
    </ligand>
</feature>
<feature type="binding site" evidence="1">
    <location>
        <begin position="105"/>
        <end position="109"/>
    </location>
    <ligand>
        <name>ATP</name>
        <dbReference type="ChEBI" id="CHEBI:30616"/>
    </ligand>
</feature>
<feature type="binding site" evidence="1">
    <location>
        <position position="513"/>
    </location>
    <ligand>
        <name>ATP</name>
        <dbReference type="ChEBI" id="CHEBI:30616"/>
    </ligand>
</feature>
<feature type="binding site" evidence="1">
    <location>
        <position position="891"/>
    </location>
    <ligand>
        <name>Zn(2+)</name>
        <dbReference type="ChEBI" id="CHEBI:29105"/>
    </ligand>
</feature>
<feature type="binding site" evidence="1">
    <location>
        <position position="893"/>
    </location>
    <ligand>
        <name>Zn(2+)</name>
        <dbReference type="ChEBI" id="CHEBI:29105"/>
    </ligand>
</feature>
<feature type="binding site" evidence="1">
    <location>
        <position position="902"/>
    </location>
    <ligand>
        <name>Zn(2+)</name>
        <dbReference type="ChEBI" id="CHEBI:29105"/>
    </ligand>
</feature>
<feature type="binding site" evidence="1">
    <location>
        <position position="903"/>
    </location>
    <ligand>
        <name>Zn(2+)</name>
        <dbReference type="ChEBI" id="CHEBI:29105"/>
    </ligand>
</feature>
<proteinExistence type="inferred from homology"/>
<evidence type="ECO:0000255" key="1">
    <source>
        <dbReference type="HAMAP-Rule" id="MF_01382"/>
    </source>
</evidence>
<evidence type="ECO:0000256" key="2">
    <source>
        <dbReference type="SAM" id="MobiDB-lite"/>
    </source>
</evidence>